<keyword id="KW-0002">3D-structure</keyword>
<keyword id="KW-0963">Cytoplasm</keyword>
<keyword id="KW-0413">Isomerase</keyword>
<keyword id="KW-1185">Reference proteome</keyword>
<keyword id="KW-0697">Rotamase</keyword>
<reference key="1">
    <citation type="journal article" date="1996" name="Yeast">
        <title>The sequence of 55 kb on the left arm of yeast chromosome XVI identifies a small nuclear RNA, a new putative protein kinase and two new putative regulators.</title>
        <authorList>
            <person name="Purnelle B."/>
            <person name="Coster F."/>
            <person name="Goffeau A."/>
        </authorList>
    </citation>
    <scope>NUCLEOTIDE SEQUENCE [GENOMIC DNA]</scope>
    <source>
        <strain>ATCC 204511 / S288c / AB972</strain>
    </source>
</reference>
<reference key="2">
    <citation type="journal article" date="1997" name="Nature">
        <title>The nucleotide sequence of Saccharomyces cerevisiae chromosome XVI.</title>
        <authorList>
            <person name="Bussey H."/>
            <person name="Storms R.K."/>
            <person name="Ahmed A."/>
            <person name="Albermann K."/>
            <person name="Allen E."/>
            <person name="Ansorge W."/>
            <person name="Araujo R."/>
            <person name="Aparicio A."/>
            <person name="Barrell B.G."/>
            <person name="Badcock K."/>
            <person name="Benes V."/>
            <person name="Botstein D."/>
            <person name="Bowman S."/>
            <person name="Brueckner M."/>
            <person name="Carpenter J."/>
            <person name="Cherry J.M."/>
            <person name="Chung E."/>
            <person name="Churcher C.M."/>
            <person name="Coster F."/>
            <person name="Davis K."/>
            <person name="Davis R.W."/>
            <person name="Dietrich F.S."/>
            <person name="Delius H."/>
            <person name="DiPaolo T."/>
            <person name="Dubois E."/>
            <person name="Duesterhoeft A."/>
            <person name="Duncan M."/>
            <person name="Floeth M."/>
            <person name="Fortin N."/>
            <person name="Friesen J.D."/>
            <person name="Fritz C."/>
            <person name="Goffeau A."/>
            <person name="Hall J."/>
            <person name="Hebling U."/>
            <person name="Heumann K."/>
            <person name="Hilbert H."/>
            <person name="Hillier L.W."/>
            <person name="Hunicke-Smith S."/>
            <person name="Hyman R.W."/>
            <person name="Johnston M."/>
            <person name="Kalman S."/>
            <person name="Kleine K."/>
            <person name="Komp C."/>
            <person name="Kurdi O."/>
            <person name="Lashkari D."/>
            <person name="Lew H."/>
            <person name="Lin A."/>
            <person name="Lin D."/>
            <person name="Louis E.J."/>
            <person name="Marathe R."/>
            <person name="Messenguy F."/>
            <person name="Mewes H.-W."/>
            <person name="Mirtipati S."/>
            <person name="Moestl D."/>
            <person name="Mueller-Auer S."/>
            <person name="Namath A."/>
            <person name="Nentwich U."/>
            <person name="Oefner P."/>
            <person name="Pearson D."/>
            <person name="Petel F.X."/>
            <person name="Pohl T.M."/>
            <person name="Purnelle B."/>
            <person name="Rajandream M.A."/>
            <person name="Rechmann S."/>
            <person name="Rieger M."/>
            <person name="Riles L."/>
            <person name="Roberts D."/>
            <person name="Schaefer M."/>
            <person name="Scharfe M."/>
            <person name="Scherens B."/>
            <person name="Schramm S."/>
            <person name="Schroeder M."/>
            <person name="Sdicu A.-M."/>
            <person name="Tettelin H."/>
            <person name="Urrestarazu L.A."/>
            <person name="Ushinsky S."/>
            <person name="Vierendeels F."/>
            <person name="Vissers S."/>
            <person name="Voss H."/>
            <person name="Walsh S.V."/>
            <person name="Wambutt R."/>
            <person name="Wang Y."/>
            <person name="Wedler E."/>
            <person name="Wedler H."/>
            <person name="Winnett E."/>
            <person name="Zhong W.-W."/>
            <person name="Zollner A."/>
            <person name="Vo D.H."/>
            <person name="Hani J."/>
        </authorList>
    </citation>
    <scope>NUCLEOTIDE SEQUENCE [LARGE SCALE GENOMIC DNA]</scope>
    <source>
        <strain>ATCC 204508 / S288c</strain>
    </source>
</reference>
<reference key="3">
    <citation type="journal article" date="2014" name="G3 (Bethesda)">
        <title>The reference genome sequence of Saccharomyces cerevisiae: Then and now.</title>
        <authorList>
            <person name="Engel S.R."/>
            <person name="Dietrich F.S."/>
            <person name="Fisk D.G."/>
            <person name="Binkley G."/>
            <person name="Balakrishnan R."/>
            <person name="Costanzo M.C."/>
            <person name="Dwight S.S."/>
            <person name="Hitz B.C."/>
            <person name="Karra K."/>
            <person name="Nash R.S."/>
            <person name="Weng S."/>
            <person name="Wong E.D."/>
            <person name="Lloyd P."/>
            <person name="Skrzypek M.S."/>
            <person name="Miyasato S.R."/>
            <person name="Simison M."/>
            <person name="Cherry J.M."/>
        </authorList>
    </citation>
    <scope>GENOME REANNOTATION</scope>
    <source>
        <strain>ATCC 204508 / S288c</strain>
    </source>
</reference>
<reference key="4">
    <citation type="journal article" date="2001" name="Exp. Cell Res.">
        <title>The Saccharomyces cerevisiae phosphotyrosyl phosphatase activator proteins are required for a subset of the functions disrupted by protein phosphatase 2A mutations.</title>
        <authorList>
            <person name="Van Hoof C."/>
            <person name="Janssens V."/>
            <person name="De Baere I."/>
            <person name="Stark M.J.R."/>
            <person name="de Winde J.H."/>
            <person name="Winderickx J."/>
            <person name="Thevelein J.M."/>
            <person name="Merlevede W."/>
            <person name="Goris J."/>
        </authorList>
    </citation>
    <scope>FUNCTION</scope>
</reference>
<reference key="5">
    <citation type="journal article" date="2001" name="Mol. Cell. Biol.">
        <title>The phosphotyrosyl phosphatase activator, Ncs1p (Rrd1p), functions with Cla4p to regulate the G(2)/M transition in Saccharomyces cerevisiae.</title>
        <authorList>
            <person name="Mitchell D.A."/>
            <person name="Sprague G.F. Jr."/>
        </authorList>
    </citation>
    <scope>FUNCTION</scope>
</reference>
<reference key="6">
    <citation type="journal article" date="2003" name="Genes Dev.">
        <title>A novel and essential mechanism determining specificity and activity of protein phosphatase 2A (PP2A) in vivo.</title>
        <authorList>
            <person name="Fellner T."/>
            <person name="Lackner D.H."/>
            <person name="Hombauer H."/>
            <person name="Piribauer P."/>
            <person name="Mudrak I."/>
            <person name="Zaragoza K."/>
            <person name="Juno C."/>
            <person name="Ogris E."/>
        </authorList>
    </citation>
    <scope>FUNCTION</scope>
    <scope>INTERACTION WITH PPH21</scope>
</reference>
<reference key="7">
    <citation type="journal article" date="2003" name="Nature">
        <title>Global analysis of protein localization in budding yeast.</title>
        <authorList>
            <person name="Huh W.-K."/>
            <person name="Falvo J.V."/>
            <person name="Gerke L.C."/>
            <person name="Carroll A.S."/>
            <person name="Howson R.W."/>
            <person name="Weissman J.S."/>
            <person name="O'Shea E.K."/>
        </authorList>
    </citation>
    <scope>SUBCELLULAR LOCATION [LARGE SCALE ANALYSIS]</scope>
</reference>
<reference key="8">
    <citation type="journal article" date="2003" name="Nature">
        <title>Global analysis of protein expression in yeast.</title>
        <authorList>
            <person name="Ghaemmaghami S."/>
            <person name="Huh W.-K."/>
            <person name="Bower K."/>
            <person name="Howson R.W."/>
            <person name="Belle A."/>
            <person name="Dephoure N."/>
            <person name="O'Shea E.K."/>
            <person name="Weissman J.S."/>
        </authorList>
    </citation>
    <scope>LEVEL OF PROTEIN EXPRESSION [LARGE SCALE ANALYSIS]</scope>
</reference>
<reference key="9">
    <citation type="journal article" date="2005" name="Biochem. J.">
        <title>Specific interactions of PP2A and PP2A-like phosphatases with the yeast PTPA homologues, Ypa1 and Ypa2.</title>
        <authorList>
            <person name="Van Hoof C."/>
            <person name="Martens E."/>
            <person name="Longin S."/>
            <person name="Jordens J."/>
            <person name="Stevens I."/>
            <person name="Janssens V."/>
            <person name="Goris J."/>
        </authorList>
    </citation>
    <scope>FUNCTION</scope>
    <scope>INTERACTION WITH PPH21 AND PPH22</scope>
</reference>
<reference key="10">
    <citation type="journal article" date="2005" name="Mol. Biol. Cell">
        <title>The yeast phosphotyrosyl phosphatase activator is part of the Tap42-phosphatase complexes.</title>
        <authorList>
            <person name="Zheng Y."/>
            <person name="Jiang Y."/>
        </authorList>
    </citation>
    <scope>FUNCTION</scope>
    <scope>INTERACTION WITH PPH21 AND TAP42</scope>
</reference>
<reference key="11">
    <citation type="journal article" date="2006" name="J. Biol. Chem.">
        <title>The protein phosphatase 2A phosphatase activator is a novel peptidyl-prolyl cis/trans-isomerase.</title>
        <authorList>
            <person name="Jordens J."/>
            <person name="Janssens V."/>
            <person name="Longin S."/>
            <person name="Stevens I."/>
            <person name="Martens E."/>
            <person name="Bultynck G."/>
            <person name="Engelborghs Y."/>
            <person name="Lescrinier E."/>
            <person name="Waelkens E."/>
            <person name="Goris J."/>
            <person name="Van Hoof C."/>
        </authorList>
    </citation>
    <scope>FUNCTION</scope>
    <scope>CATALYTIC ACTIVITY</scope>
</reference>
<feature type="chain" id="PRO_0000226120" description="Serine/threonine-protein phosphatase 2A activator 2">
    <location>
        <begin position="1"/>
        <end position="358"/>
    </location>
</feature>
<feature type="turn" evidence="9">
    <location>
        <begin position="10"/>
        <end position="13"/>
    </location>
</feature>
<feature type="helix" evidence="9">
    <location>
        <begin position="14"/>
        <end position="17"/>
    </location>
</feature>
<feature type="helix" evidence="9">
    <location>
        <begin position="20"/>
        <end position="34"/>
    </location>
</feature>
<feature type="turn" evidence="9">
    <location>
        <begin position="35"/>
        <end position="38"/>
    </location>
</feature>
<feature type="helix" evidence="9">
    <location>
        <begin position="50"/>
        <end position="66"/>
    </location>
</feature>
<feature type="helix" evidence="9">
    <location>
        <begin position="84"/>
        <end position="103"/>
    </location>
</feature>
<feature type="helix" evidence="9">
    <location>
        <begin position="109"/>
        <end position="120"/>
    </location>
</feature>
<feature type="turn" evidence="9">
    <location>
        <begin position="126"/>
        <end position="129"/>
    </location>
</feature>
<feature type="helix" evidence="9">
    <location>
        <begin position="133"/>
        <end position="148"/>
    </location>
</feature>
<feature type="helix" evidence="9">
    <location>
        <begin position="154"/>
        <end position="163"/>
    </location>
</feature>
<feature type="helix" evidence="9">
    <location>
        <begin position="165"/>
        <end position="180"/>
    </location>
</feature>
<feature type="strand" evidence="9">
    <location>
        <begin position="192"/>
        <end position="196"/>
    </location>
</feature>
<feature type="helix" evidence="9">
    <location>
        <begin position="199"/>
        <end position="207"/>
    </location>
</feature>
<feature type="turn" evidence="9">
    <location>
        <begin position="208"/>
        <end position="210"/>
    </location>
</feature>
<feature type="helix" evidence="9">
    <location>
        <begin position="216"/>
        <end position="220"/>
    </location>
</feature>
<feature type="helix" evidence="9">
    <location>
        <begin position="222"/>
        <end position="228"/>
    </location>
</feature>
<feature type="turn" evidence="9">
    <location>
        <begin position="229"/>
        <end position="231"/>
    </location>
</feature>
<feature type="helix" evidence="9">
    <location>
        <begin position="233"/>
        <end position="244"/>
    </location>
</feature>
<feature type="turn" evidence="9">
    <location>
        <begin position="245"/>
        <end position="247"/>
    </location>
</feature>
<feature type="helix" evidence="9">
    <location>
        <begin position="250"/>
        <end position="253"/>
    </location>
</feature>
<feature type="helix" evidence="9">
    <location>
        <begin position="255"/>
        <end position="260"/>
    </location>
</feature>
<feature type="helix" evidence="9">
    <location>
        <begin position="266"/>
        <end position="280"/>
    </location>
</feature>
<feature type="turn" evidence="9">
    <location>
        <begin position="281"/>
        <end position="283"/>
    </location>
</feature>
<feature type="helix" evidence="9">
    <location>
        <begin position="285"/>
        <end position="288"/>
    </location>
</feature>
<feature type="strand" evidence="9">
    <location>
        <begin position="295"/>
        <end position="297"/>
    </location>
</feature>
<accession>Q12461</accession>
<accession>D6W3L7</accession>
<evidence type="ECO:0000269" key="1">
    <source>
    </source>
</evidence>
<evidence type="ECO:0000269" key="2">
    <source>
    </source>
</evidence>
<evidence type="ECO:0000269" key="3">
    <source>
    </source>
</evidence>
<evidence type="ECO:0000269" key="4">
    <source>
    </source>
</evidence>
<evidence type="ECO:0000269" key="5">
    <source>
    </source>
</evidence>
<evidence type="ECO:0000269" key="6">
    <source>
    </source>
</evidence>
<evidence type="ECO:0000269" key="7">
    <source>
    </source>
</evidence>
<evidence type="ECO:0000269" key="8">
    <source>
    </source>
</evidence>
<evidence type="ECO:0007829" key="9">
    <source>
        <dbReference type="PDB" id="2IXN"/>
    </source>
</evidence>
<protein>
    <recommendedName>
        <fullName>Serine/threonine-protein phosphatase 2A activator 2</fullName>
        <ecNumber evidence="8">5.2.1.8</ecNumber>
    </recommendedName>
    <alternativeName>
        <fullName>Peptidyl-prolyl cis-trans isomerase PTPA-2</fullName>
        <shortName>PPIase PTPA-2</shortName>
        <shortName>Rotamase PTPA-2</shortName>
    </alternativeName>
    <alternativeName>
        <fullName>Phosphotyrosyl phosphatase activator 2</fullName>
    </alternativeName>
</protein>
<organism>
    <name type="scientific">Saccharomyces cerevisiae (strain ATCC 204508 / S288c)</name>
    <name type="common">Baker's yeast</name>
    <dbReference type="NCBI Taxonomy" id="559292"/>
    <lineage>
        <taxon>Eukaryota</taxon>
        <taxon>Fungi</taxon>
        <taxon>Dikarya</taxon>
        <taxon>Ascomycota</taxon>
        <taxon>Saccharomycotina</taxon>
        <taxon>Saccharomycetes</taxon>
        <taxon>Saccharomycetales</taxon>
        <taxon>Saccharomycetaceae</taxon>
        <taxon>Saccharomyces</taxon>
    </lineage>
</organism>
<gene>
    <name type="primary">RRD2</name>
    <name type="synonym">NOH1</name>
    <name type="synonym">YPA2</name>
    <name type="ordered locus">YPL152W</name>
</gene>
<comment type="function">
    <text evidence="1 2 3 6 7 8">PPIases accelerate the folding of proteins. It catalyzes the cis-trans isomerization of proline imidic peptide bonds in oligopeptides. Acts as a regulatory subunit for TAP42-associated PP2A-like phosphatases modulating their activity or substrate specificity, probably by inducing a conformational change in the catalytic subunit, a direct target of the PPIase. Can reactivate inactive phosphatase PP2A-phosphatase methylesterase complexes (PP2Ai) in presence of ATP and Mg(2+) by dissociating the inactive form from the complex. Acts also inhibitory at high concentrations. Involved in the regulation of cell cycle progression, mitotic spindle formation and bud morphogenesis.</text>
</comment>
<comment type="catalytic activity">
    <reaction evidence="8">
        <text>[protein]-peptidylproline (omega=180) = [protein]-peptidylproline (omega=0)</text>
        <dbReference type="Rhea" id="RHEA:16237"/>
        <dbReference type="Rhea" id="RHEA-COMP:10747"/>
        <dbReference type="Rhea" id="RHEA-COMP:10748"/>
        <dbReference type="ChEBI" id="CHEBI:83833"/>
        <dbReference type="ChEBI" id="CHEBI:83834"/>
        <dbReference type="EC" id="5.2.1.8"/>
    </reaction>
</comment>
<comment type="subunit">
    <text evidence="3 6 7">Interacts with the phosphatase PP2A catalytic subunits PPH21 and PPH22. Forms a ternary complex with PPH21-TAP42.</text>
</comment>
<comment type="interaction">
    <interactant intactId="EBI-32784">
        <id>Q12461</id>
    </interactant>
    <interactant intactId="EBI-12745">
        <id>P23594</id>
        <label>PPH21</label>
    </interactant>
    <organismsDiffer>false</organismsDiffer>
    <experiments>7</experiments>
</comment>
<comment type="subcellular location">
    <subcellularLocation>
        <location evidence="4">Cytoplasm</location>
    </subcellularLocation>
</comment>
<comment type="miscellaneous">
    <text evidence="5">Present with 2430 molecules/cell in log phase SD medium.</text>
</comment>
<sequence length="358" mass="41452">MLPEKRLLTPDDMKLWEESPTRAHFTKFIIDLAESVKGHENSQYKEPISESINSMMNLLSQIKDITQKHPVIKDADSSRFGKVEFRDFYDEVSRNSRKILRSEFPSLTDEQLEQLSIYLDESWGNKRRIDYGSGHELNFMCLLYGLYSYGIFNLSNDSTNLVLKVFIEYLKIMRILETKYWLEPAGSHGVWGLDDYHFLPFLFGAFQLTTHKHLKPISIHNNELVEMFAHRYLYFGCIAFINKVKSSASLRWHSPMLDDISGVKTWSKVAEGMIKMYKAEVLSKLPIMQHFYFSEFLPCPDGVSPPRGHIHDGTDKDDECNFEGHVHTTWGDCCGIKLPSAIAATEMNKKHHKPIPFD</sequence>
<name>PTPA2_YEAST</name>
<dbReference type="EC" id="5.2.1.8" evidence="8"/>
<dbReference type="EMBL" id="X96770">
    <property type="protein sequence ID" value="CAA65569.1"/>
    <property type="molecule type" value="Genomic_DNA"/>
</dbReference>
<dbReference type="EMBL" id="Z73508">
    <property type="protein sequence ID" value="CAA97857.1"/>
    <property type="molecule type" value="Genomic_DNA"/>
</dbReference>
<dbReference type="EMBL" id="BK006949">
    <property type="protein sequence ID" value="DAA11283.1"/>
    <property type="molecule type" value="Genomic_DNA"/>
</dbReference>
<dbReference type="PIR" id="S65163">
    <property type="entry name" value="S65163"/>
</dbReference>
<dbReference type="RefSeq" id="NP_015173.1">
    <property type="nucleotide sequence ID" value="NM_001183966.1"/>
</dbReference>
<dbReference type="PDB" id="2IXN">
    <property type="method" value="X-ray"/>
    <property type="resolution" value="2.80 A"/>
    <property type="chains" value="A/B=1-304"/>
</dbReference>
<dbReference type="PDBsum" id="2IXN"/>
<dbReference type="SMR" id="Q12461"/>
<dbReference type="BioGRID" id="36031">
    <property type="interactions" value="230"/>
</dbReference>
<dbReference type="ComplexPortal" id="CPX-1380">
    <property type="entry name" value="TAP42-RRD2-PPH21 phosphatase complex"/>
</dbReference>
<dbReference type="ComplexPortal" id="CPX-1382">
    <property type="entry name" value="TAP42-RRD2-PPH22 phosphatase complex"/>
</dbReference>
<dbReference type="DIP" id="DIP-2558N"/>
<dbReference type="FunCoup" id="Q12461">
    <property type="interactions" value="605"/>
</dbReference>
<dbReference type="IntAct" id="Q12461">
    <property type="interactions" value="4"/>
</dbReference>
<dbReference type="MINT" id="Q12461"/>
<dbReference type="STRING" id="4932.YPL152W"/>
<dbReference type="iPTMnet" id="Q12461"/>
<dbReference type="PaxDb" id="4932-YPL152W"/>
<dbReference type="PeptideAtlas" id="Q12461"/>
<dbReference type="EnsemblFungi" id="YPL152W_mRNA">
    <property type="protein sequence ID" value="YPL152W"/>
    <property type="gene ID" value="YPL152W"/>
</dbReference>
<dbReference type="GeneID" id="855951"/>
<dbReference type="KEGG" id="sce:YPL152W"/>
<dbReference type="AGR" id="SGD:S000006073"/>
<dbReference type="SGD" id="S000006073">
    <property type="gene designation" value="RRD2"/>
</dbReference>
<dbReference type="VEuPathDB" id="FungiDB:YPL152W"/>
<dbReference type="eggNOG" id="KOG2867">
    <property type="taxonomic scope" value="Eukaryota"/>
</dbReference>
<dbReference type="GeneTree" id="ENSGT00390000011500"/>
<dbReference type="HOGENOM" id="CLU_030733_0_0_1"/>
<dbReference type="InParanoid" id="Q12461"/>
<dbReference type="OMA" id="SWIKINA"/>
<dbReference type="OrthoDB" id="16120at2759"/>
<dbReference type="BioCyc" id="YEAST:G3O-34049-MONOMER"/>
<dbReference type="BioGRID-ORCS" id="855951">
    <property type="hits" value="0 hits in 10 CRISPR screens"/>
</dbReference>
<dbReference type="EvolutionaryTrace" id="Q12461"/>
<dbReference type="PRO" id="PR:Q12461"/>
<dbReference type="Proteomes" id="UP000002311">
    <property type="component" value="Chromosome XVI"/>
</dbReference>
<dbReference type="RNAct" id="Q12461">
    <property type="molecule type" value="protein"/>
</dbReference>
<dbReference type="GO" id="GO:0005737">
    <property type="term" value="C:cytoplasm"/>
    <property type="evidence" value="ECO:0000318"/>
    <property type="project" value="GO_Central"/>
</dbReference>
<dbReference type="GO" id="GO:0005634">
    <property type="term" value="C:nucleus"/>
    <property type="evidence" value="ECO:0000318"/>
    <property type="project" value="GO_Central"/>
</dbReference>
<dbReference type="GO" id="GO:0000159">
    <property type="term" value="C:protein phosphatase type 2A complex"/>
    <property type="evidence" value="ECO:0000314"/>
    <property type="project" value="SGD"/>
</dbReference>
<dbReference type="GO" id="GO:0003755">
    <property type="term" value="F:peptidyl-prolyl cis-trans isomerase activity"/>
    <property type="evidence" value="ECO:0000314"/>
    <property type="project" value="SGD"/>
</dbReference>
<dbReference type="GO" id="GO:0019888">
    <property type="term" value="F:protein phosphatase regulator activity"/>
    <property type="evidence" value="ECO:0000315"/>
    <property type="project" value="SGD"/>
</dbReference>
<dbReference type="GO" id="GO:0008160">
    <property type="term" value="F:protein tyrosine phosphatase activator activity"/>
    <property type="evidence" value="ECO:0000318"/>
    <property type="project" value="GO_Central"/>
</dbReference>
<dbReference type="GO" id="GO:0007052">
    <property type="term" value="P:mitotic spindle organization"/>
    <property type="evidence" value="ECO:0000315"/>
    <property type="project" value="SGD"/>
</dbReference>
<dbReference type="GO" id="GO:0006970">
    <property type="term" value="P:response to osmotic stress"/>
    <property type="evidence" value="ECO:0000315"/>
    <property type="project" value="SGD"/>
</dbReference>
<dbReference type="GO" id="GO:0031929">
    <property type="term" value="P:TOR signaling"/>
    <property type="evidence" value="ECO:0000303"/>
    <property type="project" value="ComplexPortal"/>
</dbReference>
<dbReference type="CDD" id="cd04087">
    <property type="entry name" value="PTPA"/>
    <property type="match status" value="1"/>
</dbReference>
<dbReference type="FunFam" id="1.20.120.1150:FF:000002">
    <property type="entry name" value="Serine/threonine-protein phosphatase 2A activator"/>
    <property type="match status" value="1"/>
</dbReference>
<dbReference type="Gene3D" id="1.20.120.1150">
    <property type="match status" value="1"/>
</dbReference>
<dbReference type="InterPro" id="IPR004327">
    <property type="entry name" value="Phstyr_phstse_ac"/>
</dbReference>
<dbReference type="InterPro" id="IPR043170">
    <property type="entry name" value="PTPA_C_lid"/>
</dbReference>
<dbReference type="InterPro" id="IPR037218">
    <property type="entry name" value="PTPA_sf"/>
</dbReference>
<dbReference type="PANTHER" id="PTHR10012">
    <property type="entry name" value="SERINE/THREONINE-PROTEIN PHOSPHATASE 2A REGULATORY SUBUNIT B"/>
    <property type="match status" value="1"/>
</dbReference>
<dbReference type="PANTHER" id="PTHR10012:SF5">
    <property type="entry name" value="SERINE_THREONINE-PROTEIN PHOSPHATASE 2A ACTIVATOR 2"/>
    <property type="match status" value="1"/>
</dbReference>
<dbReference type="Pfam" id="PF03095">
    <property type="entry name" value="PTPA"/>
    <property type="match status" value="1"/>
</dbReference>
<dbReference type="PIRSF" id="PIRSF016325">
    <property type="entry name" value="Phstyr_phstse_ac"/>
    <property type="match status" value="1"/>
</dbReference>
<dbReference type="SUPFAM" id="SSF140984">
    <property type="entry name" value="PTPA-like"/>
    <property type="match status" value="1"/>
</dbReference>
<proteinExistence type="evidence at protein level"/>